<comment type="function">
    <text evidence="1">This protein binds specifically to 23S rRNA; its binding is stimulated by other ribosomal proteins, e.g. L4, L17, and L20. It is important during the early stages of 50S assembly. It makes multiple contacts with different domains of the 23S rRNA in the assembled 50S subunit and ribosome (By similarity).</text>
</comment>
<comment type="function">
    <text evidence="1">The globular domain of the protein is located near the polypeptide exit tunnel on the outside of the subunit, while an extended beta-hairpin is found that lines the wall of the exit tunnel in the center of the 70S ribosome.</text>
</comment>
<comment type="subunit">
    <text evidence="1">Part of the 50S ribosomal subunit.</text>
</comment>
<comment type="similarity">
    <text evidence="1">Belongs to the universal ribosomal protein uL22 family.</text>
</comment>
<proteinExistence type="inferred from homology"/>
<protein>
    <recommendedName>
        <fullName evidence="1">Large ribosomal subunit protein uL22</fullName>
    </recommendedName>
    <alternativeName>
        <fullName evidence="2">50S ribosomal protein L22</fullName>
    </alternativeName>
</protein>
<accession>Q28UV5</accession>
<name>RL22_JANSC</name>
<sequence length="126" mass="14097">MSKDKNPRRVADNEAMAKLRMLKTSPQKLNLVAGLIRGQKVEKALTDLTFSKKRIAVDVKKCLQSAIANAENNHGLDVDELIVAEAWVGKNLVMKRGRPRARGRFGKILKPFSELTITVRQVEETS</sequence>
<gene>
    <name evidence="1" type="primary">rplV</name>
    <name type="ordered locus">Jann_0590</name>
</gene>
<keyword id="KW-1185">Reference proteome</keyword>
<keyword id="KW-0687">Ribonucleoprotein</keyword>
<keyword id="KW-0689">Ribosomal protein</keyword>
<keyword id="KW-0694">RNA-binding</keyword>
<keyword id="KW-0699">rRNA-binding</keyword>
<reference key="1">
    <citation type="submission" date="2006-02" db="EMBL/GenBank/DDBJ databases">
        <title>Complete sequence of chromosome of Jannaschia sp. CCS1.</title>
        <authorList>
            <consortium name="US DOE Joint Genome Institute"/>
            <person name="Copeland A."/>
            <person name="Lucas S."/>
            <person name="Lapidus A."/>
            <person name="Barry K."/>
            <person name="Detter J.C."/>
            <person name="Glavina del Rio T."/>
            <person name="Hammon N."/>
            <person name="Israni S."/>
            <person name="Pitluck S."/>
            <person name="Brettin T."/>
            <person name="Bruce D."/>
            <person name="Han C."/>
            <person name="Tapia R."/>
            <person name="Gilna P."/>
            <person name="Chertkov O."/>
            <person name="Saunders E."/>
            <person name="Schmutz J."/>
            <person name="Larimer F."/>
            <person name="Land M."/>
            <person name="Kyrpides N."/>
            <person name="Lykidis A."/>
            <person name="Moran M.A."/>
            <person name="Belas R."/>
            <person name="Ye W."/>
            <person name="Buchan A."/>
            <person name="Gonzalez J.M."/>
            <person name="Schell M.A."/>
            <person name="Richardson P."/>
        </authorList>
    </citation>
    <scope>NUCLEOTIDE SEQUENCE [LARGE SCALE GENOMIC DNA]</scope>
    <source>
        <strain>CCS1</strain>
    </source>
</reference>
<feature type="chain" id="PRO_0000243158" description="Large ribosomal subunit protein uL22">
    <location>
        <begin position="1"/>
        <end position="126"/>
    </location>
</feature>
<evidence type="ECO:0000255" key="1">
    <source>
        <dbReference type="HAMAP-Rule" id="MF_01331"/>
    </source>
</evidence>
<evidence type="ECO:0000305" key="2"/>
<organism>
    <name type="scientific">Jannaschia sp. (strain CCS1)</name>
    <dbReference type="NCBI Taxonomy" id="290400"/>
    <lineage>
        <taxon>Bacteria</taxon>
        <taxon>Pseudomonadati</taxon>
        <taxon>Pseudomonadota</taxon>
        <taxon>Alphaproteobacteria</taxon>
        <taxon>Rhodobacterales</taxon>
        <taxon>Roseobacteraceae</taxon>
        <taxon>Jannaschia</taxon>
    </lineage>
</organism>
<dbReference type="EMBL" id="CP000264">
    <property type="protein sequence ID" value="ABD53507.1"/>
    <property type="molecule type" value="Genomic_DNA"/>
</dbReference>
<dbReference type="RefSeq" id="WP_011453715.1">
    <property type="nucleotide sequence ID" value="NC_007802.1"/>
</dbReference>
<dbReference type="SMR" id="Q28UV5"/>
<dbReference type="STRING" id="290400.Jann_0590"/>
<dbReference type="KEGG" id="jan:Jann_0590"/>
<dbReference type="eggNOG" id="COG0091">
    <property type="taxonomic scope" value="Bacteria"/>
</dbReference>
<dbReference type="HOGENOM" id="CLU_083987_3_0_5"/>
<dbReference type="OrthoDB" id="9805969at2"/>
<dbReference type="Proteomes" id="UP000008326">
    <property type="component" value="Chromosome"/>
</dbReference>
<dbReference type="GO" id="GO:0022625">
    <property type="term" value="C:cytosolic large ribosomal subunit"/>
    <property type="evidence" value="ECO:0007669"/>
    <property type="project" value="TreeGrafter"/>
</dbReference>
<dbReference type="GO" id="GO:0019843">
    <property type="term" value="F:rRNA binding"/>
    <property type="evidence" value="ECO:0007669"/>
    <property type="project" value="UniProtKB-UniRule"/>
</dbReference>
<dbReference type="GO" id="GO:0003735">
    <property type="term" value="F:structural constituent of ribosome"/>
    <property type="evidence" value="ECO:0007669"/>
    <property type="project" value="InterPro"/>
</dbReference>
<dbReference type="GO" id="GO:0006412">
    <property type="term" value="P:translation"/>
    <property type="evidence" value="ECO:0007669"/>
    <property type="project" value="UniProtKB-UniRule"/>
</dbReference>
<dbReference type="CDD" id="cd00336">
    <property type="entry name" value="Ribosomal_L22"/>
    <property type="match status" value="1"/>
</dbReference>
<dbReference type="Gene3D" id="3.90.470.10">
    <property type="entry name" value="Ribosomal protein L22/L17"/>
    <property type="match status" value="1"/>
</dbReference>
<dbReference type="HAMAP" id="MF_01331_B">
    <property type="entry name" value="Ribosomal_uL22_B"/>
    <property type="match status" value="1"/>
</dbReference>
<dbReference type="InterPro" id="IPR001063">
    <property type="entry name" value="Ribosomal_uL22"/>
</dbReference>
<dbReference type="InterPro" id="IPR005727">
    <property type="entry name" value="Ribosomal_uL22_bac/chlpt-type"/>
</dbReference>
<dbReference type="InterPro" id="IPR047867">
    <property type="entry name" value="Ribosomal_uL22_bac/org-type"/>
</dbReference>
<dbReference type="InterPro" id="IPR036394">
    <property type="entry name" value="Ribosomal_uL22_sf"/>
</dbReference>
<dbReference type="NCBIfam" id="TIGR01044">
    <property type="entry name" value="rplV_bact"/>
    <property type="match status" value="1"/>
</dbReference>
<dbReference type="PANTHER" id="PTHR13501">
    <property type="entry name" value="CHLOROPLAST 50S RIBOSOMAL PROTEIN L22-RELATED"/>
    <property type="match status" value="1"/>
</dbReference>
<dbReference type="PANTHER" id="PTHR13501:SF8">
    <property type="entry name" value="LARGE RIBOSOMAL SUBUNIT PROTEIN UL22M"/>
    <property type="match status" value="1"/>
</dbReference>
<dbReference type="Pfam" id="PF00237">
    <property type="entry name" value="Ribosomal_L22"/>
    <property type="match status" value="1"/>
</dbReference>
<dbReference type="SUPFAM" id="SSF54843">
    <property type="entry name" value="Ribosomal protein L22"/>
    <property type="match status" value="1"/>
</dbReference>